<gene>
    <name type="primary">mak10</name>
    <name type="synonym">naa35</name>
    <name type="ORF">SPBC1861.03</name>
</gene>
<protein>
    <recommendedName>
        <fullName>N-alpha-acetyltransferase 35, NatC auxiliary subunit</fullName>
    </recommendedName>
    <alternativeName>
        <fullName>N-terminal acetyltransferase C complex subunit mak10</fullName>
        <shortName>NatC complex subunit mak10</shortName>
    </alternativeName>
</protein>
<dbReference type="EMBL" id="CU329671">
    <property type="protein sequence ID" value="CAB52739.1"/>
    <property type="molecule type" value="Genomic_DNA"/>
</dbReference>
<dbReference type="PIR" id="T39742">
    <property type="entry name" value="T39742"/>
</dbReference>
<dbReference type="RefSeq" id="NP_596720.1">
    <property type="nucleotide sequence ID" value="NM_001022645.2"/>
</dbReference>
<dbReference type="PDB" id="7L1K">
    <property type="method" value="EM"/>
    <property type="resolution" value="3.16 A"/>
    <property type="chains" value="B=1-708"/>
</dbReference>
<dbReference type="PDBsum" id="7L1K"/>
<dbReference type="EMDB" id="EMD-23110"/>
<dbReference type="SMR" id="Q9USY3"/>
<dbReference type="BioGRID" id="276244">
    <property type="interactions" value="52"/>
</dbReference>
<dbReference type="FunCoup" id="Q9USY3">
    <property type="interactions" value="500"/>
</dbReference>
<dbReference type="STRING" id="284812.Q9USY3"/>
<dbReference type="iPTMnet" id="Q9USY3"/>
<dbReference type="PaxDb" id="4896-SPBC1861.03.1"/>
<dbReference type="EnsemblFungi" id="SPBC1861.03.1">
    <property type="protein sequence ID" value="SPBC1861.03.1:pep"/>
    <property type="gene ID" value="SPBC1861.03"/>
</dbReference>
<dbReference type="GeneID" id="2539689"/>
<dbReference type="KEGG" id="spo:2539689"/>
<dbReference type="PomBase" id="SPBC1861.03">
    <property type="gene designation" value="mak10"/>
</dbReference>
<dbReference type="VEuPathDB" id="FungiDB:SPBC1861.03"/>
<dbReference type="eggNOG" id="KOG2343">
    <property type="taxonomic scope" value="Eukaryota"/>
</dbReference>
<dbReference type="HOGENOM" id="CLU_011757_0_0_1"/>
<dbReference type="InParanoid" id="Q9USY3"/>
<dbReference type="OMA" id="ESFLMID"/>
<dbReference type="PhylomeDB" id="Q9USY3"/>
<dbReference type="PRO" id="PR:Q9USY3"/>
<dbReference type="Proteomes" id="UP000002485">
    <property type="component" value="Chromosome II"/>
</dbReference>
<dbReference type="GO" id="GO:0005829">
    <property type="term" value="C:cytosol"/>
    <property type="evidence" value="ECO:0007005"/>
    <property type="project" value="PomBase"/>
</dbReference>
<dbReference type="GO" id="GO:0031417">
    <property type="term" value="C:NatC complex"/>
    <property type="evidence" value="ECO:0000314"/>
    <property type="project" value="PomBase"/>
</dbReference>
<dbReference type="GO" id="GO:0005634">
    <property type="term" value="C:nucleus"/>
    <property type="evidence" value="ECO:0007005"/>
    <property type="project" value="PomBase"/>
</dbReference>
<dbReference type="GO" id="GO:0051604">
    <property type="term" value="P:protein maturation"/>
    <property type="evidence" value="ECO:0000266"/>
    <property type="project" value="PomBase"/>
</dbReference>
<dbReference type="InterPro" id="IPR007244">
    <property type="entry name" value="Naa35/Mak10"/>
</dbReference>
<dbReference type="PANTHER" id="PTHR21373">
    <property type="entry name" value="GLUCOSE REPRESSIBLE PROTEIN MAK10"/>
    <property type="match status" value="1"/>
</dbReference>
<dbReference type="PANTHER" id="PTHR21373:SF0">
    <property type="entry name" value="N-ALPHA-ACETYLTRANSFERASE 35, NATC AUXILIARY SUBUNIT"/>
    <property type="match status" value="1"/>
</dbReference>
<dbReference type="Pfam" id="PF04112">
    <property type="entry name" value="Mak10"/>
    <property type="match status" value="1"/>
</dbReference>
<sequence>MSVKESLSLLNSMQGNVKIGNVEPAKGNEGYVDNAGYVDCTKSYFEATKSLKEEQLVCDPKFTLLDSISAFEIMEPKMDSGIDYQPLRVDFSRDLSYLEILALMDLIVSAEKEWHYGSPLSESLLCSAHVFSICKSPISQVGDSGFSSGSGRNTTDIVLFPFVLAVIKCCDIVHREFLMGNLYDEEDISSFSYHMSFLQNYPIEKLNYLLQSSIEYLASEVIKFSAELRQIIEGILNRIQLRIGILRVYERSDIKTTIDALHLIKNLVPEIQNTVSVVDSSIKESILKQYWDFRVQAQLVATAPVRNIPPTGIEHSYQRILYFADDMLLILNSHTLASSLAVYQFCLDFTRLNRTPEPYVRSSLQALITANNAVNLRDQPTSYMLECIREFSGLPSNFYNPNTRTVIEKNSISSAYGPLVESLIAHSTNIMVDLVRICSHNPCRFRRNLINLLPEITVAHFEAEALDLKFVAKSLPSNGPFSSFIYHVKLNAIEHILLSSFEQKLHQPYQWPHFFAVLDHVFSIHQTHLELHGKDRNTPPMAKTFVTYLHRILNAIKETYSGYLLLTVLCMRLNIIKTPSFTLDEKIQESYYMAHYRPLINLRQPKPLLRSEADCIIKNLQNFSTDDLIIKSNEKFTAAKNSLINVIKSGFEQNEFINPYFLQTNYLKNLLCCCITNLVSLAILSKDHSANLKIVEIPGNPLPSLSRT</sequence>
<accession>Q9USY3</accession>
<comment type="function">
    <text evidence="1">Component of the NatC N-terminal acetyltransferase.</text>
</comment>
<comment type="subcellular location">
    <subcellularLocation>
        <location evidence="2">Cytoplasm</location>
    </subcellularLocation>
    <subcellularLocation>
        <location evidence="2">Nucleus</location>
    </subcellularLocation>
</comment>
<comment type="similarity">
    <text evidence="3">Belongs to the MAK10 family.</text>
</comment>
<proteinExistence type="evidence at protein level"/>
<organism>
    <name type="scientific">Schizosaccharomyces pombe (strain 972 / ATCC 24843)</name>
    <name type="common">Fission yeast</name>
    <dbReference type="NCBI Taxonomy" id="284812"/>
    <lineage>
        <taxon>Eukaryota</taxon>
        <taxon>Fungi</taxon>
        <taxon>Dikarya</taxon>
        <taxon>Ascomycota</taxon>
        <taxon>Taphrinomycotina</taxon>
        <taxon>Schizosaccharomycetes</taxon>
        <taxon>Schizosaccharomycetales</taxon>
        <taxon>Schizosaccharomycetaceae</taxon>
        <taxon>Schizosaccharomyces</taxon>
    </lineage>
</organism>
<reference key="1">
    <citation type="journal article" date="2002" name="Nature">
        <title>The genome sequence of Schizosaccharomyces pombe.</title>
        <authorList>
            <person name="Wood V."/>
            <person name="Gwilliam R."/>
            <person name="Rajandream M.A."/>
            <person name="Lyne M.H."/>
            <person name="Lyne R."/>
            <person name="Stewart A."/>
            <person name="Sgouros J.G."/>
            <person name="Peat N."/>
            <person name="Hayles J."/>
            <person name="Baker S.G."/>
            <person name="Basham D."/>
            <person name="Bowman S."/>
            <person name="Brooks K."/>
            <person name="Brown D."/>
            <person name="Brown S."/>
            <person name="Chillingworth T."/>
            <person name="Churcher C.M."/>
            <person name="Collins M."/>
            <person name="Connor R."/>
            <person name="Cronin A."/>
            <person name="Davis P."/>
            <person name="Feltwell T."/>
            <person name="Fraser A."/>
            <person name="Gentles S."/>
            <person name="Goble A."/>
            <person name="Hamlin N."/>
            <person name="Harris D.E."/>
            <person name="Hidalgo J."/>
            <person name="Hodgson G."/>
            <person name="Holroyd S."/>
            <person name="Hornsby T."/>
            <person name="Howarth S."/>
            <person name="Huckle E.J."/>
            <person name="Hunt S."/>
            <person name="Jagels K."/>
            <person name="James K.D."/>
            <person name="Jones L."/>
            <person name="Jones M."/>
            <person name="Leather S."/>
            <person name="McDonald S."/>
            <person name="McLean J."/>
            <person name="Mooney P."/>
            <person name="Moule S."/>
            <person name="Mungall K.L."/>
            <person name="Murphy L.D."/>
            <person name="Niblett D."/>
            <person name="Odell C."/>
            <person name="Oliver K."/>
            <person name="O'Neil S."/>
            <person name="Pearson D."/>
            <person name="Quail M.A."/>
            <person name="Rabbinowitsch E."/>
            <person name="Rutherford K.M."/>
            <person name="Rutter S."/>
            <person name="Saunders D."/>
            <person name="Seeger K."/>
            <person name="Sharp S."/>
            <person name="Skelton J."/>
            <person name="Simmonds M.N."/>
            <person name="Squares R."/>
            <person name="Squares S."/>
            <person name="Stevens K."/>
            <person name="Taylor K."/>
            <person name="Taylor R.G."/>
            <person name="Tivey A."/>
            <person name="Walsh S.V."/>
            <person name="Warren T."/>
            <person name="Whitehead S."/>
            <person name="Woodward J.R."/>
            <person name="Volckaert G."/>
            <person name="Aert R."/>
            <person name="Robben J."/>
            <person name="Grymonprez B."/>
            <person name="Weltjens I."/>
            <person name="Vanstreels E."/>
            <person name="Rieger M."/>
            <person name="Schaefer M."/>
            <person name="Mueller-Auer S."/>
            <person name="Gabel C."/>
            <person name="Fuchs M."/>
            <person name="Duesterhoeft A."/>
            <person name="Fritzc C."/>
            <person name="Holzer E."/>
            <person name="Moestl D."/>
            <person name="Hilbert H."/>
            <person name="Borzym K."/>
            <person name="Langer I."/>
            <person name="Beck A."/>
            <person name="Lehrach H."/>
            <person name="Reinhardt R."/>
            <person name="Pohl T.M."/>
            <person name="Eger P."/>
            <person name="Zimmermann W."/>
            <person name="Wedler H."/>
            <person name="Wambutt R."/>
            <person name="Purnelle B."/>
            <person name="Goffeau A."/>
            <person name="Cadieu E."/>
            <person name="Dreano S."/>
            <person name="Gloux S."/>
            <person name="Lelaure V."/>
            <person name="Mottier S."/>
            <person name="Galibert F."/>
            <person name="Aves S.J."/>
            <person name="Xiang Z."/>
            <person name="Hunt C."/>
            <person name="Moore K."/>
            <person name="Hurst S.M."/>
            <person name="Lucas M."/>
            <person name="Rochet M."/>
            <person name="Gaillardin C."/>
            <person name="Tallada V.A."/>
            <person name="Garzon A."/>
            <person name="Thode G."/>
            <person name="Daga R.R."/>
            <person name="Cruzado L."/>
            <person name="Jimenez J."/>
            <person name="Sanchez M."/>
            <person name="del Rey F."/>
            <person name="Benito J."/>
            <person name="Dominguez A."/>
            <person name="Revuelta J.L."/>
            <person name="Moreno S."/>
            <person name="Armstrong J."/>
            <person name="Forsburg S.L."/>
            <person name="Cerutti L."/>
            <person name="Lowe T."/>
            <person name="McCombie W.R."/>
            <person name="Paulsen I."/>
            <person name="Potashkin J."/>
            <person name="Shpakovski G.V."/>
            <person name="Ussery D."/>
            <person name="Barrell B.G."/>
            <person name="Nurse P."/>
        </authorList>
    </citation>
    <scope>NUCLEOTIDE SEQUENCE [LARGE SCALE GENOMIC DNA]</scope>
    <source>
        <strain>972 / ATCC 24843</strain>
    </source>
</reference>
<reference key="2">
    <citation type="journal article" date="2006" name="Nat. Biotechnol.">
        <title>ORFeome cloning and global analysis of protein localization in the fission yeast Schizosaccharomyces pombe.</title>
        <authorList>
            <person name="Matsuyama A."/>
            <person name="Arai R."/>
            <person name="Yashiroda Y."/>
            <person name="Shirai A."/>
            <person name="Kamata A."/>
            <person name="Sekido S."/>
            <person name="Kobayashi Y."/>
            <person name="Hashimoto A."/>
            <person name="Hamamoto M."/>
            <person name="Hiraoka Y."/>
            <person name="Horinouchi S."/>
            <person name="Yoshida M."/>
        </authorList>
    </citation>
    <scope>SUBCELLULAR LOCATION [LARGE SCALE ANALYSIS]</scope>
</reference>
<evidence type="ECO:0000250" key="1"/>
<evidence type="ECO:0000269" key="2">
    <source>
    </source>
</evidence>
<evidence type="ECO:0000305" key="3"/>
<evidence type="ECO:0007829" key="4">
    <source>
        <dbReference type="PDB" id="7L1K"/>
    </source>
</evidence>
<keyword id="KW-0002">3D-structure</keyword>
<keyword id="KW-0963">Cytoplasm</keyword>
<keyword id="KW-0539">Nucleus</keyword>
<keyword id="KW-1185">Reference proteome</keyword>
<name>NAA35_SCHPO</name>
<feature type="chain" id="PRO_0000316239" description="N-alpha-acetyltransferase 35, NatC auxiliary subunit">
    <location>
        <begin position="1"/>
        <end position="708"/>
    </location>
</feature>
<feature type="turn" evidence="4">
    <location>
        <begin position="42"/>
        <end position="47"/>
    </location>
</feature>
<feature type="helix" evidence="4">
    <location>
        <begin position="66"/>
        <end position="68"/>
    </location>
</feature>
<feature type="turn" evidence="4">
    <location>
        <begin position="97"/>
        <end position="100"/>
    </location>
</feature>
<feature type="helix" evidence="4">
    <location>
        <begin position="101"/>
        <end position="111"/>
    </location>
</feature>
<feature type="turn" evidence="4">
    <location>
        <begin position="112"/>
        <end position="116"/>
    </location>
</feature>
<feature type="turn" evidence="4">
    <location>
        <begin position="121"/>
        <end position="124"/>
    </location>
</feature>
<feature type="helix" evidence="4">
    <location>
        <begin position="125"/>
        <end position="127"/>
    </location>
</feature>
<feature type="helix" evidence="4">
    <location>
        <begin position="130"/>
        <end position="133"/>
    </location>
</feature>
<feature type="strand" evidence="4">
    <location>
        <begin position="146"/>
        <end position="149"/>
    </location>
</feature>
<feature type="turn" evidence="4">
    <location>
        <begin position="154"/>
        <end position="158"/>
    </location>
</feature>
<feature type="helix" evidence="4">
    <location>
        <begin position="159"/>
        <end position="172"/>
    </location>
</feature>
<feature type="helix" evidence="4">
    <location>
        <begin position="174"/>
        <end position="177"/>
    </location>
</feature>
<feature type="strand" evidence="4">
    <location>
        <begin position="180"/>
        <end position="182"/>
    </location>
</feature>
<feature type="turn" evidence="4">
    <location>
        <begin position="184"/>
        <end position="186"/>
    </location>
</feature>
<feature type="helix" evidence="4">
    <location>
        <begin position="203"/>
        <end position="217"/>
    </location>
</feature>
<feature type="turn" evidence="4">
    <location>
        <begin position="218"/>
        <end position="223"/>
    </location>
</feature>
<feature type="strand" evidence="4">
    <location>
        <begin position="226"/>
        <end position="228"/>
    </location>
</feature>
<feature type="helix" evidence="4">
    <location>
        <begin position="229"/>
        <end position="249"/>
    </location>
</feature>
<feature type="strand" evidence="4">
    <location>
        <begin position="252"/>
        <end position="255"/>
    </location>
</feature>
<feature type="turn" evidence="4">
    <location>
        <begin position="256"/>
        <end position="260"/>
    </location>
</feature>
<feature type="helix" evidence="4">
    <location>
        <begin position="261"/>
        <end position="271"/>
    </location>
</feature>
<feature type="helix" evidence="4">
    <location>
        <begin position="275"/>
        <end position="277"/>
    </location>
</feature>
<feature type="helix" evidence="4">
    <location>
        <begin position="282"/>
        <end position="285"/>
    </location>
</feature>
<feature type="turn" evidence="4">
    <location>
        <begin position="287"/>
        <end position="289"/>
    </location>
</feature>
<feature type="helix" evidence="4">
    <location>
        <begin position="295"/>
        <end position="298"/>
    </location>
</feature>
<feature type="strand" evidence="4">
    <location>
        <begin position="302"/>
        <end position="304"/>
    </location>
</feature>
<feature type="helix" evidence="4">
    <location>
        <begin position="313"/>
        <end position="330"/>
    </location>
</feature>
<feature type="helix" evidence="4">
    <location>
        <begin position="331"/>
        <end position="334"/>
    </location>
</feature>
<feature type="helix" evidence="4">
    <location>
        <begin position="340"/>
        <end position="348"/>
    </location>
</feature>
<feature type="helix" evidence="4">
    <location>
        <begin position="349"/>
        <end position="351"/>
    </location>
</feature>
<feature type="helix" evidence="4">
    <location>
        <begin position="358"/>
        <end position="362"/>
    </location>
</feature>
<feature type="helix" evidence="4">
    <location>
        <begin position="364"/>
        <end position="369"/>
    </location>
</feature>
<feature type="strand" evidence="4">
    <location>
        <begin position="372"/>
        <end position="374"/>
    </location>
</feature>
<feature type="strand" evidence="4">
    <location>
        <begin position="377"/>
        <end position="379"/>
    </location>
</feature>
<feature type="helix" evidence="4">
    <location>
        <begin position="381"/>
        <end position="391"/>
    </location>
</feature>
<feature type="turn" evidence="4">
    <location>
        <begin position="396"/>
        <end position="398"/>
    </location>
</feature>
<feature type="turn" evidence="4">
    <location>
        <begin position="401"/>
        <end position="403"/>
    </location>
</feature>
<feature type="helix" evidence="4">
    <location>
        <begin position="412"/>
        <end position="415"/>
    </location>
</feature>
<feature type="helix" evidence="4">
    <location>
        <begin position="417"/>
        <end position="436"/>
    </location>
</feature>
<feature type="turn" evidence="4">
    <location>
        <begin position="437"/>
        <end position="439"/>
    </location>
</feature>
<feature type="helix" evidence="4">
    <location>
        <begin position="442"/>
        <end position="450"/>
    </location>
</feature>
<feature type="helix" evidence="4">
    <location>
        <begin position="453"/>
        <end position="461"/>
    </location>
</feature>
<feature type="turn" evidence="4">
    <location>
        <begin position="462"/>
        <end position="466"/>
    </location>
</feature>
<feature type="helix" evidence="4">
    <location>
        <begin position="467"/>
        <end position="469"/>
    </location>
</feature>
<feature type="helix" evidence="4">
    <location>
        <begin position="482"/>
        <end position="502"/>
    </location>
</feature>
<feature type="helix" evidence="4">
    <location>
        <begin position="508"/>
        <end position="510"/>
    </location>
</feature>
<feature type="helix" evidence="4">
    <location>
        <begin position="511"/>
        <end position="532"/>
    </location>
</feature>
<feature type="strand" evidence="4">
    <location>
        <begin position="536"/>
        <end position="538"/>
    </location>
</feature>
<feature type="turn" evidence="4">
    <location>
        <begin position="540"/>
        <end position="542"/>
    </location>
</feature>
<feature type="helix" evidence="4">
    <location>
        <begin position="543"/>
        <end position="560"/>
    </location>
</feature>
<feature type="helix" evidence="4">
    <location>
        <begin position="564"/>
        <end position="572"/>
    </location>
</feature>
<feature type="helix" evidence="4">
    <location>
        <begin position="580"/>
        <end position="582"/>
    </location>
</feature>
<feature type="helix" evidence="4">
    <location>
        <begin position="585"/>
        <end position="595"/>
    </location>
</feature>
<feature type="helix" evidence="4">
    <location>
        <begin position="598"/>
        <end position="601"/>
    </location>
</feature>
<feature type="strand" evidence="4">
    <location>
        <begin position="603"/>
        <end position="605"/>
    </location>
</feature>
<feature type="helix" evidence="4">
    <location>
        <begin position="610"/>
        <end position="621"/>
    </location>
</feature>
<feature type="helix" evidence="4">
    <location>
        <begin position="625"/>
        <end position="647"/>
    </location>
</feature>
<feature type="strand" evidence="4">
    <location>
        <begin position="653"/>
        <end position="657"/>
    </location>
</feature>
<feature type="helix" evidence="4">
    <location>
        <begin position="669"/>
        <end position="672"/>
    </location>
</feature>
<feature type="turn" evidence="4">
    <location>
        <begin position="673"/>
        <end position="678"/>
    </location>
</feature>
<feature type="helix" evidence="4">
    <location>
        <begin position="681"/>
        <end position="686"/>
    </location>
</feature>